<dbReference type="EC" id="2.3.1.117" evidence="1"/>
<dbReference type="EMBL" id="CP000352">
    <property type="protein sequence ID" value="ABF08306.1"/>
    <property type="molecule type" value="Genomic_DNA"/>
</dbReference>
<dbReference type="RefSeq" id="WP_008649080.1">
    <property type="nucleotide sequence ID" value="NC_007973.1"/>
</dbReference>
<dbReference type="SMR" id="Q1LNH0"/>
<dbReference type="STRING" id="266264.Rmet_1423"/>
<dbReference type="GeneID" id="60822180"/>
<dbReference type="KEGG" id="rme:Rmet_1423"/>
<dbReference type="eggNOG" id="COG2171">
    <property type="taxonomic scope" value="Bacteria"/>
</dbReference>
<dbReference type="HOGENOM" id="CLU_050859_0_1_4"/>
<dbReference type="UniPathway" id="UPA00034">
    <property type="reaction ID" value="UER00019"/>
</dbReference>
<dbReference type="Proteomes" id="UP000002429">
    <property type="component" value="Chromosome"/>
</dbReference>
<dbReference type="GO" id="GO:0005737">
    <property type="term" value="C:cytoplasm"/>
    <property type="evidence" value="ECO:0007669"/>
    <property type="project" value="UniProtKB-SubCell"/>
</dbReference>
<dbReference type="GO" id="GO:0008666">
    <property type="term" value="F:2,3,4,5-tetrahydropyridine-2,6-dicarboxylate N-succinyltransferase activity"/>
    <property type="evidence" value="ECO:0007669"/>
    <property type="project" value="UniProtKB-UniRule"/>
</dbReference>
<dbReference type="GO" id="GO:0016779">
    <property type="term" value="F:nucleotidyltransferase activity"/>
    <property type="evidence" value="ECO:0007669"/>
    <property type="project" value="TreeGrafter"/>
</dbReference>
<dbReference type="GO" id="GO:0019877">
    <property type="term" value="P:diaminopimelate biosynthetic process"/>
    <property type="evidence" value="ECO:0007669"/>
    <property type="project" value="UniProtKB-UniRule"/>
</dbReference>
<dbReference type="GO" id="GO:0009089">
    <property type="term" value="P:lysine biosynthetic process via diaminopimelate"/>
    <property type="evidence" value="ECO:0007669"/>
    <property type="project" value="UniProtKB-UniRule"/>
</dbReference>
<dbReference type="CDD" id="cd03350">
    <property type="entry name" value="LbH_THP_succinylT"/>
    <property type="match status" value="1"/>
</dbReference>
<dbReference type="Gene3D" id="2.160.10.10">
    <property type="entry name" value="Hexapeptide repeat proteins"/>
    <property type="match status" value="1"/>
</dbReference>
<dbReference type="Gene3D" id="1.10.166.10">
    <property type="entry name" value="Tetrahydrodipicolinate-N-succinyltransferase, N-terminal domain"/>
    <property type="match status" value="1"/>
</dbReference>
<dbReference type="HAMAP" id="MF_00811">
    <property type="entry name" value="DapD"/>
    <property type="match status" value="1"/>
</dbReference>
<dbReference type="InterPro" id="IPR005664">
    <property type="entry name" value="DapD_Trfase_Hexpep_rpt_fam"/>
</dbReference>
<dbReference type="InterPro" id="IPR001451">
    <property type="entry name" value="Hexapep"/>
</dbReference>
<dbReference type="InterPro" id="IPR018357">
    <property type="entry name" value="Hexapep_transf_CS"/>
</dbReference>
<dbReference type="InterPro" id="IPR023180">
    <property type="entry name" value="THP_succinylTrfase_dom1"/>
</dbReference>
<dbReference type="InterPro" id="IPR037133">
    <property type="entry name" value="THP_succinylTrfase_N_sf"/>
</dbReference>
<dbReference type="InterPro" id="IPR011004">
    <property type="entry name" value="Trimer_LpxA-like_sf"/>
</dbReference>
<dbReference type="NCBIfam" id="TIGR00965">
    <property type="entry name" value="dapD"/>
    <property type="match status" value="1"/>
</dbReference>
<dbReference type="NCBIfam" id="NF008808">
    <property type="entry name" value="PRK11830.1"/>
    <property type="match status" value="1"/>
</dbReference>
<dbReference type="PANTHER" id="PTHR19136:SF52">
    <property type="entry name" value="2,3,4,5-TETRAHYDROPYRIDINE-2,6-DICARBOXYLATE N-SUCCINYLTRANSFERASE"/>
    <property type="match status" value="1"/>
</dbReference>
<dbReference type="PANTHER" id="PTHR19136">
    <property type="entry name" value="MOLYBDENUM COFACTOR GUANYLYLTRANSFERASE"/>
    <property type="match status" value="1"/>
</dbReference>
<dbReference type="Pfam" id="PF14602">
    <property type="entry name" value="Hexapep_2"/>
    <property type="match status" value="1"/>
</dbReference>
<dbReference type="Pfam" id="PF14805">
    <property type="entry name" value="THDPS_N_2"/>
    <property type="match status" value="1"/>
</dbReference>
<dbReference type="SUPFAM" id="SSF51161">
    <property type="entry name" value="Trimeric LpxA-like enzymes"/>
    <property type="match status" value="1"/>
</dbReference>
<dbReference type="PROSITE" id="PS00101">
    <property type="entry name" value="HEXAPEP_TRANSFERASES"/>
    <property type="match status" value="1"/>
</dbReference>
<name>DAPD_CUPMC</name>
<sequence length="274" mass="29525">MTQALQALIDQAWEDRTSLSPKSAPNDIREAVANVISQLDSGALRVAEKQGKDWVVNQWIKKAVLLSFRLEDNAPMSAGGFAQFYDKVPTKFANWTGDDFAKAGFRVVPPAVARRGSYIARNAVLMPSYVNIGAYVDEGTMVDTWATVGSCAQIGKNVHLSGGVGIGGVLEPLQANPVIIEDNCFIGARSEVVEGVIIEENSVISMGVYLGQSTKIYDRETGEIHYGRVPAGSVVVAGNLPSKDGKYSLYCAVIVKKVDAQTRAKTSLNDLLRD</sequence>
<organism>
    <name type="scientific">Cupriavidus metallidurans (strain ATCC 43123 / DSM 2839 / NBRC 102507 / CH34)</name>
    <name type="common">Ralstonia metallidurans</name>
    <dbReference type="NCBI Taxonomy" id="266264"/>
    <lineage>
        <taxon>Bacteria</taxon>
        <taxon>Pseudomonadati</taxon>
        <taxon>Pseudomonadota</taxon>
        <taxon>Betaproteobacteria</taxon>
        <taxon>Burkholderiales</taxon>
        <taxon>Burkholderiaceae</taxon>
        <taxon>Cupriavidus</taxon>
    </lineage>
</organism>
<feature type="chain" id="PRO_1000047166" description="2,3,4,5-tetrahydropyridine-2,6-dicarboxylate N-succinyltransferase">
    <location>
        <begin position="1"/>
        <end position="274"/>
    </location>
</feature>
<feature type="binding site" evidence="1">
    <location>
        <position position="106"/>
    </location>
    <ligand>
        <name>substrate</name>
    </ligand>
</feature>
<feature type="binding site" evidence="1">
    <location>
        <position position="143"/>
    </location>
    <ligand>
        <name>substrate</name>
    </ligand>
</feature>
<keyword id="KW-0012">Acyltransferase</keyword>
<keyword id="KW-0028">Amino-acid biosynthesis</keyword>
<keyword id="KW-0963">Cytoplasm</keyword>
<keyword id="KW-0220">Diaminopimelate biosynthesis</keyword>
<keyword id="KW-0457">Lysine biosynthesis</keyword>
<keyword id="KW-1185">Reference proteome</keyword>
<keyword id="KW-0677">Repeat</keyword>
<keyword id="KW-0808">Transferase</keyword>
<accession>Q1LNH0</accession>
<proteinExistence type="inferred from homology"/>
<comment type="catalytic activity">
    <reaction evidence="1">
        <text>(S)-2,3,4,5-tetrahydrodipicolinate + succinyl-CoA + H2O = (S)-2-succinylamino-6-oxoheptanedioate + CoA</text>
        <dbReference type="Rhea" id="RHEA:17325"/>
        <dbReference type="ChEBI" id="CHEBI:15377"/>
        <dbReference type="ChEBI" id="CHEBI:15685"/>
        <dbReference type="ChEBI" id="CHEBI:16845"/>
        <dbReference type="ChEBI" id="CHEBI:57287"/>
        <dbReference type="ChEBI" id="CHEBI:57292"/>
        <dbReference type="EC" id="2.3.1.117"/>
    </reaction>
</comment>
<comment type="pathway">
    <text evidence="1">Amino-acid biosynthesis; L-lysine biosynthesis via DAP pathway; LL-2,6-diaminopimelate from (S)-tetrahydrodipicolinate (succinylase route): step 1/3.</text>
</comment>
<comment type="subunit">
    <text evidence="1">Homotrimer.</text>
</comment>
<comment type="subcellular location">
    <subcellularLocation>
        <location evidence="1">Cytoplasm</location>
    </subcellularLocation>
</comment>
<comment type="similarity">
    <text evidence="1">Belongs to the transferase hexapeptide repeat family.</text>
</comment>
<gene>
    <name evidence="1" type="primary">dapD</name>
    <name type="ordered locus">Rmet_1423</name>
</gene>
<protein>
    <recommendedName>
        <fullName evidence="1">2,3,4,5-tetrahydropyridine-2,6-dicarboxylate N-succinyltransferase</fullName>
        <ecNumber evidence="1">2.3.1.117</ecNumber>
    </recommendedName>
    <alternativeName>
        <fullName evidence="1">Tetrahydrodipicolinate N-succinyltransferase</fullName>
        <shortName evidence="1">THDP succinyltransferase</shortName>
        <shortName evidence="1">THP succinyltransferase</shortName>
        <shortName evidence="1">Tetrahydropicolinate succinylase</shortName>
    </alternativeName>
</protein>
<reference key="1">
    <citation type="journal article" date="2010" name="PLoS ONE">
        <title>The complete genome sequence of Cupriavidus metallidurans strain CH34, a master survivalist in harsh and anthropogenic environments.</title>
        <authorList>
            <person name="Janssen P.J."/>
            <person name="Van Houdt R."/>
            <person name="Moors H."/>
            <person name="Monsieurs P."/>
            <person name="Morin N."/>
            <person name="Michaux A."/>
            <person name="Benotmane M.A."/>
            <person name="Leys N."/>
            <person name="Vallaeys T."/>
            <person name="Lapidus A."/>
            <person name="Monchy S."/>
            <person name="Medigue C."/>
            <person name="Taghavi S."/>
            <person name="McCorkle S."/>
            <person name="Dunn J."/>
            <person name="van der Lelie D."/>
            <person name="Mergeay M."/>
        </authorList>
    </citation>
    <scope>NUCLEOTIDE SEQUENCE [LARGE SCALE GENOMIC DNA]</scope>
    <source>
        <strain>ATCC 43123 / DSM 2839 / NBRC 102507 / CH34</strain>
    </source>
</reference>
<evidence type="ECO:0000255" key="1">
    <source>
        <dbReference type="HAMAP-Rule" id="MF_00811"/>
    </source>
</evidence>